<comment type="function">
    <text evidence="1">Required during biogenesis of c-type cytochromes (cytochrome c6 and cytochrome f) at the step of heme attachment.</text>
</comment>
<comment type="subunit">
    <text evidence="1">May interact with CcsA.</text>
</comment>
<comment type="subcellular location">
    <subcellularLocation>
        <location evidence="1">Cellular thylakoid membrane</location>
        <topology evidence="1">Multi-pass membrane protein</topology>
    </subcellularLocation>
</comment>
<comment type="similarity">
    <text evidence="1">Belongs to the Ccs1/CcsB family.</text>
</comment>
<keyword id="KW-0201">Cytochrome c-type biogenesis</keyword>
<keyword id="KW-0472">Membrane</keyword>
<keyword id="KW-1185">Reference proteome</keyword>
<keyword id="KW-0793">Thylakoid</keyword>
<keyword id="KW-0812">Transmembrane</keyword>
<keyword id="KW-1133">Transmembrane helix</keyword>
<name>CCS1_SYNJB</name>
<sequence>MVIYSLPLARWVSSLRRYFRHELLPLLADLRLAIGLLLAIAVLSATGTVIEQEETAAFYQAHYPEHPALFGFLTWRVILSLGLDHVYRTPWFLAILILFGSSLAACSLTRQWPMLKRARRWSYLTRPQSFQRLPFRTYLPQQSLQGLPQQLRRQGYLVFQEGHYLYARKGLIGRIGPILVHVSMLLILLGAIWGSISGFKAQELIPSGGVASIQHLTGAGDLARAHLPTWQIRANRFWIDYAADGRVKQFYSDLSILDQGQEVKRQTISVNHPLSYRGVTLYQADWSIDSIRIRINNSPTFQIPVVPVRTEAGNKLWGAFVPTQPDMSQGLTLLLPDLQGTALLYDTEGQWMGSLRQGMSLALDEVAPQRFPNPLTLYLDEVIGATGLQIKSDPGIPAVYLGFGLLMVGVVMSYFSYSQIWALQTETGLYLGGKTNRALVTFEREFDRLVEQQKVAFSLSQIPVEAEIG</sequence>
<protein>
    <recommendedName>
        <fullName evidence="1">Cytochrome c biogenesis protein CcsB</fullName>
    </recommendedName>
</protein>
<dbReference type="EMBL" id="CP000240">
    <property type="protein sequence ID" value="ABD01614.1"/>
    <property type="molecule type" value="Genomic_DNA"/>
</dbReference>
<dbReference type="RefSeq" id="WP_011432273.1">
    <property type="nucleotide sequence ID" value="NC_007776.1"/>
</dbReference>
<dbReference type="STRING" id="321332.CYB_0626"/>
<dbReference type="KEGG" id="cyb:CYB_0626"/>
<dbReference type="eggNOG" id="COG1333">
    <property type="taxonomic scope" value="Bacteria"/>
</dbReference>
<dbReference type="HOGENOM" id="CLU_034630_0_0_3"/>
<dbReference type="OrthoDB" id="9770923at2"/>
<dbReference type="Proteomes" id="UP000001938">
    <property type="component" value="Chromosome"/>
</dbReference>
<dbReference type="GO" id="GO:0031676">
    <property type="term" value="C:plasma membrane-derived thylakoid membrane"/>
    <property type="evidence" value="ECO:0007669"/>
    <property type="project" value="UniProtKB-SubCell"/>
</dbReference>
<dbReference type="GO" id="GO:0017004">
    <property type="term" value="P:cytochrome complex assembly"/>
    <property type="evidence" value="ECO:0007669"/>
    <property type="project" value="UniProtKB-UniRule"/>
</dbReference>
<dbReference type="HAMAP" id="MF_01392">
    <property type="entry name" value="CytC_Ccs1"/>
    <property type="match status" value="1"/>
</dbReference>
<dbReference type="InterPro" id="IPR023494">
    <property type="entry name" value="Cyt_c_bgen_Ccs1/CcsB/ResB"/>
</dbReference>
<dbReference type="InterPro" id="IPR007816">
    <property type="entry name" value="ResB-like_domain"/>
</dbReference>
<dbReference type="PANTHER" id="PTHR31566">
    <property type="entry name" value="CYTOCHROME C BIOGENESIS PROTEIN CCS1, CHLOROPLASTIC"/>
    <property type="match status" value="1"/>
</dbReference>
<dbReference type="PANTHER" id="PTHR31566:SF0">
    <property type="entry name" value="CYTOCHROME C BIOGENESIS PROTEIN CCS1, CHLOROPLASTIC"/>
    <property type="match status" value="1"/>
</dbReference>
<dbReference type="Pfam" id="PF05140">
    <property type="entry name" value="ResB"/>
    <property type="match status" value="1"/>
</dbReference>
<gene>
    <name evidence="1" type="primary">ccsB</name>
    <name evidence="1" type="synonym">ccs1</name>
    <name type="ordered locus">CYB_0626</name>
</gene>
<evidence type="ECO:0000255" key="1">
    <source>
        <dbReference type="HAMAP-Rule" id="MF_01392"/>
    </source>
</evidence>
<proteinExistence type="inferred from homology"/>
<accession>Q2JNP5</accession>
<reference key="1">
    <citation type="journal article" date="2007" name="ISME J.">
        <title>Population level functional diversity in a microbial community revealed by comparative genomic and metagenomic analyses.</title>
        <authorList>
            <person name="Bhaya D."/>
            <person name="Grossman A.R."/>
            <person name="Steunou A.-S."/>
            <person name="Khuri N."/>
            <person name="Cohan F.M."/>
            <person name="Hamamura N."/>
            <person name="Melendrez M.C."/>
            <person name="Bateson M.M."/>
            <person name="Ward D.M."/>
            <person name="Heidelberg J.F."/>
        </authorList>
    </citation>
    <scope>NUCLEOTIDE SEQUENCE [LARGE SCALE GENOMIC DNA]</scope>
    <source>
        <strain>JA-2-3B'a(2-13)</strain>
    </source>
</reference>
<organism>
    <name type="scientific">Synechococcus sp. (strain JA-2-3B'a(2-13))</name>
    <name type="common">Cyanobacteria bacterium Yellowstone B-Prime</name>
    <dbReference type="NCBI Taxonomy" id="321332"/>
    <lineage>
        <taxon>Bacteria</taxon>
        <taxon>Bacillati</taxon>
        <taxon>Cyanobacteriota</taxon>
        <taxon>Cyanophyceae</taxon>
        <taxon>Synechococcales</taxon>
        <taxon>Synechococcaceae</taxon>
        <taxon>Synechococcus</taxon>
    </lineage>
</organism>
<feature type="chain" id="PRO_0000363630" description="Cytochrome c biogenesis protein CcsB">
    <location>
        <begin position="1"/>
        <end position="469"/>
    </location>
</feature>
<feature type="transmembrane region" description="Helical" evidence="1">
    <location>
        <begin position="30"/>
        <end position="50"/>
    </location>
</feature>
<feature type="transmembrane region" description="Helical" evidence="1">
    <location>
        <begin position="89"/>
        <end position="109"/>
    </location>
</feature>
<feature type="transmembrane region" description="Helical" evidence="1">
    <location>
        <begin position="175"/>
        <end position="195"/>
    </location>
</feature>